<gene>
    <name evidence="1" type="primary">aroQ</name>
    <name type="ordered locus">HSM_1604</name>
</gene>
<comment type="function">
    <text evidence="1">Catalyzes a trans-dehydration via an enolate intermediate.</text>
</comment>
<comment type="catalytic activity">
    <reaction evidence="1">
        <text>3-dehydroquinate = 3-dehydroshikimate + H2O</text>
        <dbReference type="Rhea" id="RHEA:21096"/>
        <dbReference type="ChEBI" id="CHEBI:15377"/>
        <dbReference type="ChEBI" id="CHEBI:16630"/>
        <dbReference type="ChEBI" id="CHEBI:32364"/>
        <dbReference type="EC" id="4.2.1.10"/>
    </reaction>
</comment>
<comment type="pathway">
    <text evidence="1">Metabolic intermediate biosynthesis; chorismate biosynthesis; chorismate from D-erythrose 4-phosphate and phosphoenolpyruvate: step 3/7.</text>
</comment>
<comment type="subunit">
    <text evidence="1">Homododecamer.</text>
</comment>
<comment type="similarity">
    <text evidence="1">Belongs to the type-II 3-dehydroquinase family.</text>
</comment>
<reference key="1">
    <citation type="submission" date="2008-02" db="EMBL/GenBank/DDBJ databases">
        <title>Complete sequence of Haemophilus somnus 2336.</title>
        <authorList>
            <consortium name="US DOE Joint Genome Institute"/>
            <person name="Siddaramappa S."/>
            <person name="Duncan A.J."/>
            <person name="Challacombe J.F."/>
            <person name="Rainey D."/>
            <person name="Gillaspy A.F."/>
            <person name="Carson M."/>
            <person name="Gipson J."/>
            <person name="Gipson M."/>
            <person name="Bruce D."/>
            <person name="Detter J.C."/>
            <person name="Han C.S."/>
            <person name="Land M."/>
            <person name="Tapia R."/>
            <person name="Thompson L.S."/>
            <person name="Orvis J."/>
            <person name="Zaitshik J."/>
            <person name="Barnes G."/>
            <person name="Brettin T.S."/>
            <person name="Dyer D.W."/>
            <person name="Inzana T.J."/>
        </authorList>
    </citation>
    <scope>NUCLEOTIDE SEQUENCE [LARGE SCALE GENOMIC DNA]</scope>
    <source>
        <strain>2336</strain>
    </source>
</reference>
<organism>
    <name type="scientific">Histophilus somni (strain 2336)</name>
    <name type="common">Haemophilus somnus</name>
    <dbReference type="NCBI Taxonomy" id="228400"/>
    <lineage>
        <taxon>Bacteria</taxon>
        <taxon>Pseudomonadati</taxon>
        <taxon>Pseudomonadota</taxon>
        <taxon>Gammaproteobacteria</taxon>
        <taxon>Pasteurellales</taxon>
        <taxon>Pasteurellaceae</taxon>
        <taxon>Histophilus</taxon>
    </lineage>
</organism>
<proteinExistence type="inferred from homology"/>
<name>AROQ_HISS2</name>
<dbReference type="EC" id="4.2.1.10" evidence="1"/>
<dbReference type="EMBL" id="CP000947">
    <property type="protein sequence ID" value="ACA31368.1"/>
    <property type="molecule type" value="Genomic_DNA"/>
</dbReference>
<dbReference type="RefSeq" id="WP_011608728.1">
    <property type="nucleotide sequence ID" value="NC_010519.1"/>
</dbReference>
<dbReference type="SMR" id="B0UV80"/>
<dbReference type="STRING" id="228400.HSM_1604"/>
<dbReference type="GeneID" id="31487907"/>
<dbReference type="KEGG" id="hsm:HSM_1604"/>
<dbReference type="HOGENOM" id="CLU_090968_1_0_6"/>
<dbReference type="UniPathway" id="UPA00053">
    <property type="reaction ID" value="UER00086"/>
</dbReference>
<dbReference type="GO" id="GO:0003855">
    <property type="term" value="F:3-dehydroquinate dehydratase activity"/>
    <property type="evidence" value="ECO:0007669"/>
    <property type="project" value="UniProtKB-UniRule"/>
</dbReference>
<dbReference type="GO" id="GO:0008652">
    <property type="term" value="P:amino acid biosynthetic process"/>
    <property type="evidence" value="ECO:0007669"/>
    <property type="project" value="UniProtKB-KW"/>
</dbReference>
<dbReference type="GO" id="GO:0009073">
    <property type="term" value="P:aromatic amino acid family biosynthetic process"/>
    <property type="evidence" value="ECO:0007669"/>
    <property type="project" value="UniProtKB-KW"/>
</dbReference>
<dbReference type="GO" id="GO:0009423">
    <property type="term" value="P:chorismate biosynthetic process"/>
    <property type="evidence" value="ECO:0007669"/>
    <property type="project" value="UniProtKB-UniRule"/>
</dbReference>
<dbReference type="GO" id="GO:0019631">
    <property type="term" value="P:quinate catabolic process"/>
    <property type="evidence" value="ECO:0007669"/>
    <property type="project" value="TreeGrafter"/>
</dbReference>
<dbReference type="CDD" id="cd00466">
    <property type="entry name" value="DHQase_II"/>
    <property type="match status" value="1"/>
</dbReference>
<dbReference type="Gene3D" id="3.40.50.9100">
    <property type="entry name" value="Dehydroquinase, class II"/>
    <property type="match status" value="1"/>
</dbReference>
<dbReference type="HAMAP" id="MF_00169">
    <property type="entry name" value="AroQ"/>
    <property type="match status" value="1"/>
</dbReference>
<dbReference type="InterPro" id="IPR001874">
    <property type="entry name" value="DHquinase_II"/>
</dbReference>
<dbReference type="InterPro" id="IPR018509">
    <property type="entry name" value="DHquinase_II_CS"/>
</dbReference>
<dbReference type="InterPro" id="IPR036441">
    <property type="entry name" value="DHquinase_II_sf"/>
</dbReference>
<dbReference type="NCBIfam" id="TIGR01088">
    <property type="entry name" value="aroQ"/>
    <property type="match status" value="1"/>
</dbReference>
<dbReference type="NCBIfam" id="NF003804">
    <property type="entry name" value="PRK05395.1-1"/>
    <property type="match status" value="1"/>
</dbReference>
<dbReference type="NCBIfam" id="NF003805">
    <property type="entry name" value="PRK05395.1-2"/>
    <property type="match status" value="1"/>
</dbReference>
<dbReference type="NCBIfam" id="NF003806">
    <property type="entry name" value="PRK05395.1-3"/>
    <property type="match status" value="1"/>
</dbReference>
<dbReference type="NCBIfam" id="NF003807">
    <property type="entry name" value="PRK05395.1-4"/>
    <property type="match status" value="1"/>
</dbReference>
<dbReference type="PANTHER" id="PTHR21272">
    <property type="entry name" value="CATABOLIC 3-DEHYDROQUINASE"/>
    <property type="match status" value="1"/>
</dbReference>
<dbReference type="PANTHER" id="PTHR21272:SF3">
    <property type="entry name" value="CATABOLIC 3-DEHYDROQUINASE"/>
    <property type="match status" value="1"/>
</dbReference>
<dbReference type="Pfam" id="PF01220">
    <property type="entry name" value="DHquinase_II"/>
    <property type="match status" value="1"/>
</dbReference>
<dbReference type="PIRSF" id="PIRSF001399">
    <property type="entry name" value="DHquinase_II"/>
    <property type="match status" value="1"/>
</dbReference>
<dbReference type="SUPFAM" id="SSF52304">
    <property type="entry name" value="Type II 3-dehydroquinate dehydratase"/>
    <property type="match status" value="1"/>
</dbReference>
<dbReference type="PROSITE" id="PS01029">
    <property type="entry name" value="DEHYDROQUINASE_II"/>
    <property type="match status" value="1"/>
</dbReference>
<sequence length="150" mass="17175">MSRYAKILLLNGPNLNMLGKREPTHYGNLSLEDIEQRMQELAQQHQLELSCFQANSEEKLIDKIHQSFHLIDFIIINPAAYTHTSVALRDALLSVSIPFVEVHLSNIHRREPFRHHSYLSDIAEGVICGLGAQGYEFALQYASNYLKKIK</sequence>
<keyword id="KW-0028">Amino-acid biosynthesis</keyword>
<keyword id="KW-0057">Aromatic amino acid biosynthesis</keyword>
<keyword id="KW-0456">Lyase</keyword>
<accession>B0UV80</accession>
<protein>
    <recommendedName>
        <fullName evidence="1">3-dehydroquinate dehydratase</fullName>
        <shortName evidence="1">3-dehydroquinase</shortName>
        <ecNumber evidence="1">4.2.1.10</ecNumber>
    </recommendedName>
    <alternativeName>
        <fullName evidence="1">Type II DHQase</fullName>
    </alternativeName>
</protein>
<feature type="chain" id="PRO_1000077043" description="3-dehydroquinate dehydratase">
    <location>
        <begin position="1"/>
        <end position="150"/>
    </location>
</feature>
<feature type="active site" description="Proton acceptor" evidence="1">
    <location>
        <position position="26"/>
    </location>
</feature>
<feature type="active site" description="Proton donor" evidence="1">
    <location>
        <position position="103"/>
    </location>
</feature>
<feature type="binding site" evidence="1">
    <location>
        <position position="77"/>
    </location>
    <ligand>
        <name>substrate</name>
    </ligand>
</feature>
<feature type="binding site" evidence="1">
    <location>
        <position position="83"/>
    </location>
    <ligand>
        <name>substrate</name>
    </ligand>
</feature>
<feature type="binding site" evidence="1">
    <location>
        <position position="90"/>
    </location>
    <ligand>
        <name>substrate</name>
    </ligand>
</feature>
<feature type="binding site" evidence="1">
    <location>
        <begin position="104"/>
        <end position="105"/>
    </location>
    <ligand>
        <name>substrate</name>
    </ligand>
</feature>
<feature type="binding site" evidence="1">
    <location>
        <position position="114"/>
    </location>
    <ligand>
        <name>substrate</name>
    </ligand>
</feature>
<feature type="site" description="Transition state stabilizer" evidence="1">
    <location>
        <position position="21"/>
    </location>
</feature>
<evidence type="ECO:0000255" key="1">
    <source>
        <dbReference type="HAMAP-Rule" id="MF_00169"/>
    </source>
</evidence>